<keyword id="KW-0413">Isomerase</keyword>
<keyword id="KW-0479">Metal-binding</keyword>
<keyword id="KW-1185">Reference proteome</keyword>
<keyword id="KW-0862">Zinc</keyword>
<comment type="function">
    <text evidence="1">Catalyzes the isomerization of 5-dehydro-4-deoxy-D-glucuronate to 3-deoxy-D-glycero-2,5-hexodiulosonate.</text>
</comment>
<comment type="catalytic activity">
    <reaction evidence="1">
        <text>5-dehydro-4-deoxy-D-glucuronate = 3-deoxy-D-glycero-2,5-hexodiulosonate</text>
        <dbReference type="Rhea" id="RHEA:23896"/>
        <dbReference type="ChEBI" id="CHEBI:17117"/>
        <dbReference type="ChEBI" id="CHEBI:29071"/>
        <dbReference type="EC" id="5.3.1.17"/>
    </reaction>
</comment>
<comment type="cofactor">
    <cofactor evidence="1">
        <name>Zn(2+)</name>
        <dbReference type="ChEBI" id="CHEBI:29105"/>
    </cofactor>
    <text evidence="1">Binds 1 zinc ion per subunit.</text>
</comment>
<comment type="pathway">
    <text evidence="1">Glycan metabolism; pectin degradation; 2-dehydro-3-deoxy-D-gluconate from pectin: step 4/5.</text>
</comment>
<comment type="similarity">
    <text evidence="1">Belongs to the KduI family.</text>
</comment>
<protein>
    <recommendedName>
        <fullName evidence="1">4-deoxy-L-threo-5-hexosulose-uronate ketol-isomerase</fullName>
        <ecNumber evidence="1">5.3.1.17</ecNumber>
    </recommendedName>
    <alternativeName>
        <fullName evidence="1">5-keto-4-deoxyuronate isomerase</fullName>
    </alternativeName>
    <alternativeName>
        <fullName evidence="1">DKI isomerase</fullName>
    </alternativeName>
</protein>
<accession>B2TYP7</accession>
<sequence>MDVRQSIHSAHAKTLDTQGLHNEFLVEKVFVADEYTMVYSHIDRIIVGGIMPITKTVSVGGEVGKQLGVSYFLERRELGVINIGGAGTITVDGQCYEIGHRDALYVGKGAKEVVFASIDTAIYYNCAPAHTTYPTKKVTPDEVSPVTLGDNLTSNRRTINKYFVPDVLETCQLSMGLTELAPGNLWNTMPCHTHERRMEVYFYFNMDDDACVFHMMGQPQETRHIVMHNEQAVISPSWSIHSGVGTKAYTFIWGMVGENQVFDDMDHVAVKDLR</sequence>
<feature type="chain" id="PRO_1000131896" description="4-deoxy-L-threo-5-hexosulose-uronate ketol-isomerase">
    <location>
        <begin position="1"/>
        <end position="274"/>
    </location>
</feature>
<feature type="binding site" evidence="1">
    <location>
        <position position="192"/>
    </location>
    <ligand>
        <name>Zn(2+)</name>
        <dbReference type="ChEBI" id="CHEBI:29105"/>
    </ligand>
</feature>
<feature type="binding site" evidence="1">
    <location>
        <position position="194"/>
    </location>
    <ligand>
        <name>Zn(2+)</name>
        <dbReference type="ChEBI" id="CHEBI:29105"/>
    </ligand>
</feature>
<feature type="binding site" evidence="1">
    <location>
        <position position="199"/>
    </location>
    <ligand>
        <name>Zn(2+)</name>
        <dbReference type="ChEBI" id="CHEBI:29105"/>
    </ligand>
</feature>
<feature type="binding site" evidence="1">
    <location>
        <position position="241"/>
    </location>
    <ligand>
        <name>Zn(2+)</name>
        <dbReference type="ChEBI" id="CHEBI:29105"/>
    </ligand>
</feature>
<dbReference type="EC" id="5.3.1.17" evidence="1"/>
<dbReference type="EMBL" id="CP001063">
    <property type="protein sequence ID" value="ACD08727.1"/>
    <property type="molecule type" value="Genomic_DNA"/>
</dbReference>
<dbReference type="RefSeq" id="WP_000383218.1">
    <property type="nucleotide sequence ID" value="NC_010658.1"/>
</dbReference>
<dbReference type="SMR" id="B2TYP7"/>
<dbReference type="STRING" id="344609.SbBS512_E3017"/>
<dbReference type="KEGG" id="sbc:SbBS512_E3017"/>
<dbReference type="HOGENOM" id="CLU_062609_0_0_6"/>
<dbReference type="UniPathway" id="UPA00545">
    <property type="reaction ID" value="UER00826"/>
</dbReference>
<dbReference type="Proteomes" id="UP000001030">
    <property type="component" value="Chromosome"/>
</dbReference>
<dbReference type="GO" id="GO:0008697">
    <property type="term" value="F:4-deoxy-L-threo-5-hexosulose-uronate ketol-isomerase activity"/>
    <property type="evidence" value="ECO:0007669"/>
    <property type="project" value="UniProtKB-UniRule"/>
</dbReference>
<dbReference type="GO" id="GO:0008270">
    <property type="term" value="F:zinc ion binding"/>
    <property type="evidence" value="ECO:0007669"/>
    <property type="project" value="UniProtKB-UniRule"/>
</dbReference>
<dbReference type="GO" id="GO:0019698">
    <property type="term" value="P:D-galacturonate catabolic process"/>
    <property type="evidence" value="ECO:0007669"/>
    <property type="project" value="TreeGrafter"/>
</dbReference>
<dbReference type="GO" id="GO:0042840">
    <property type="term" value="P:D-glucuronate catabolic process"/>
    <property type="evidence" value="ECO:0007669"/>
    <property type="project" value="TreeGrafter"/>
</dbReference>
<dbReference type="GO" id="GO:0045490">
    <property type="term" value="P:pectin catabolic process"/>
    <property type="evidence" value="ECO:0007669"/>
    <property type="project" value="UniProtKB-UniRule"/>
</dbReference>
<dbReference type="CDD" id="cd20491">
    <property type="entry name" value="cupin_KduI_C"/>
    <property type="match status" value="1"/>
</dbReference>
<dbReference type="CDD" id="cd20294">
    <property type="entry name" value="cupin_KduI_N"/>
    <property type="match status" value="1"/>
</dbReference>
<dbReference type="FunFam" id="2.60.120.10:FF:000018">
    <property type="entry name" value="4-deoxy-L-threo-5-hexosulose-uronate ketol-isomerase"/>
    <property type="match status" value="1"/>
</dbReference>
<dbReference type="FunFam" id="2.60.120.520:FF:000001">
    <property type="entry name" value="4-deoxy-L-threo-5-hexosulose-uronate ketol-isomerase"/>
    <property type="match status" value="1"/>
</dbReference>
<dbReference type="Gene3D" id="2.60.120.10">
    <property type="entry name" value="Jelly Rolls"/>
    <property type="match status" value="1"/>
</dbReference>
<dbReference type="Gene3D" id="2.60.120.520">
    <property type="entry name" value="pectin degrading enzyme 5-keto 4- deoxyuronate isomerase, domain 1"/>
    <property type="match status" value="1"/>
</dbReference>
<dbReference type="HAMAP" id="MF_00687">
    <property type="entry name" value="KduI"/>
    <property type="match status" value="1"/>
</dbReference>
<dbReference type="InterPro" id="IPR007045">
    <property type="entry name" value="KduI"/>
</dbReference>
<dbReference type="InterPro" id="IPR021120">
    <property type="entry name" value="KduI/IolB_isomerase"/>
</dbReference>
<dbReference type="InterPro" id="IPR027449">
    <property type="entry name" value="KduI_N"/>
</dbReference>
<dbReference type="InterPro" id="IPR014710">
    <property type="entry name" value="RmlC-like_jellyroll"/>
</dbReference>
<dbReference type="InterPro" id="IPR011051">
    <property type="entry name" value="RmlC_Cupin_sf"/>
</dbReference>
<dbReference type="NCBIfam" id="NF002091">
    <property type="entry name" value="PRK00924.1"/>
    <property type="match status" value="1"/>
</dbReference>
<dbReference type="PANTHER" id="PTHR38461">
    <property type="entry name" value="4-DEOXY-L-THREO-5-HEXOSULOSE-URONATE KETOL-ISOMERASE"/>
    <property type="match status" value="1"/>
</dbReference>
<dbReference type="PANTHER" id="PTHR38461:SF1">
    <property type="entry name" value="4-DEOXY-L-THREO-5-HEXOSULOSE-URONATE KETOL-ISOMERASE"/>
    <property type="match status" value="1"/>
</dbReference>
<dbReference type="Pfam" id="PF04962">
    <property type="entry name" value="KduI"/>
    <property type="match status" value="1"/>
</dbReference>
<dbReference type="PIRSF" id="PIRSF006625">
    <property type="entry name" value="KduI"/>
    <property type="match status" value="1"/>
</dbReference>
<dbReference type="SUPFAM" id="SSF51182">
    <property type="entry name" value="RmlC-like cupins"/>
    <property type="match status" value="1"/>
</dbReference>
<organism>
    <name type="scientific">Shigella boydii serotype 18 (strain CDC 3083-94 / BS512)</name>
    <dbReference type="NCBI Taxonomy" id="344609"/>
    <lineage>
        <taxon>Bacteria</taxon>
        <taxon>Pseudomonadati</taxon>
        <taxon>Pseudomonadota</taxon>
        <taxon>Gammaproteobacteria</taxon>
        <taxon>Enterobacterales</taxon>
        <taxon>Enterobacteriaceae</taxon>
        <taxon>Shigella</taxon>
    </lineage>
</organism>
<proteinExistence type="inferred from homology"/>
<gene>
    <name evidence="1" type="primary">kduI</name>
    <name type="ordered locus">SbBS512_E3017</name>
</gene>
<evidence type="ECO:0000255" key="1">
    <source>
        <dbReference type="HAMAP-Rule" id="MF_00687"/>
    </source>
</evidence>
<reference key="1">
    <citation type="submission" date="2008-05" db="EMBL/GenBank/DDBJ databases">
        <title>Complete sequence of Shigella boydii serotype 18 strain BS512.</title>
        <authorList>
            <person name="Rasko D.A."/>
            <person name="Rosovitz M."/>
            <person name="Maurelli A.T."/>
            <person name="Myers G."/>
            <person name="Seshadri R."/>
            <person name="Cer R."/>
            <person name="Jiang L."/>
            <person name="Ravel J."/>
            <person name="Sebastian Y."/>
        </authorList>
    </citation>
    <scope>NUCLEOTIDE SEQUENCE [LARGE SCALE GENOMIC DNA]</scope>
    <source>
        <strain>CDC 3083-94 / BS512</strain>
    </source>
</reference>
<name>KDUI_SHIB3</name>